<evidence type="ECO:0000255" key="1">
    <source>
        <dbReference type="HAMAP-Rule" id="MF_00048"/>
    </source>
</evidence>
<feature type="chain" id="PRO_1000200137" description="UPF0102 protein Dtur_1530">
    <location>
        <begin position="1"/>
        <end position="118"/>
    </location>
</feature>
<protein>
    <recommendedName>
        <fullName evidence="1">UPF0102 protein Dtur_1530</fullName>
    </recommendedName>
</protein>
<accession>B8E2G0</accession>
<organism>
    <name type="scientific">Dictyoglomus turgidum (strain DSM 6724 / Z-1310)</name>
    <dbReference type="NCBI Taxonomy" id="515635"/>
    <lineage>
        <taxon>Bacteria</taxon>
        <taxon>Pseudomonadati</taxon>
        <taxon>Dictyoglomota</taxon>
        <taxon>Dictyoglomia</taxon>
        <taxon>Dictyoglomales</taxon>
        <taxon>Dictyoglomaceae</taxon>
        <taxon>Dictyoglomus</taxon>
    </lineage>
</organism>
<keyword id="KW-1185">Reference proteome</keyword>
<reference key="1">
    <citation type="journal article" date="2016" name="Front. Microbiol.">
        <title>The complete genome sequence of hyperthermophile Dictyoglomus turgidum DSM 6724 reveals a specialized carbohydrate fermentor.</title>
        <authorList>
            <person name="Brumm P.J."/>
            <person name="Gowda K."/>
            <person name="Robb F.T."/>
            <person name="Mead D.A."/>
        </authorList>
    </citation>
    <scope>NUCLEOTIDE SEQUENCE [LARGE SCALE GENOMIC DNA]</scope>
    <source>
        <strain>DSM 6724 / Z-1310</strain>
    </source>
</reference>
<comment type="similarity">
    <text evidence="1">Belongs to the UPF0102 family.</text>
</comment>
<gene>
    <name type="ordered locus">Dtur_1530</name>
</gene>
<name>Y1530_DICTD</name>
<dbReference type="EMBL" id="CP001251">
    <property type="protein sequence ID" value="ACK42804.1"/>
    <property type="molecule type" value="Genomic_DNA"/>
</dbReference>
<dbReference type="RefSeq" id="WP_012583880.1">
    <property type="nucleotide sequence ID" value="NC_011661.1"/>
</dbReference>
<dbReference type="RefSeq" id="YP_002353418.1">
    <property type="nucleotide sequence ID" value="NC_011661.1"/>
</dbReference>
<dbReference type="SMR" id="B8E2G0"/>
<dbReference type="STRING" id="515635.Dtur_1530"/>
<dbReference type="EnsemblBacteria" id="ACK42804">
    <property type="protein sequence ID" value="ACK42804"/>
    <property type="gene ID" value="Dtur_1530"/>
</dbReference>
<dbReference type="KEGG" id="dtu:Dtur_1530"/>
<dbReference type="PATRIC" id="fig|515635.4.peg.1579"/>
<dbReference type="eggNOG" id="COG0792">
    <property type="taxonomic scope" value="Bacteria"/>
</dbReference>
<dbReference type="HOGENOM" id="CLU_115353_2_3_0"/>
<dbReference type="InParanoid" id="B8E2G0"/>
<dbReference type="OrthoDB" id="9802516at2"/>
<dbReference type="Proteomes" id="UP000007719">
    <property type="component" value="Chromosome"/>
</dbReference>
<dbReference type="GO" id="GO:0003676">
    <property type="term" value="F:nucleic acid binding"/>
    <property type="evidence" value="ECO:0007669"/>
    <property type="project" value="InterPro"/>
</dbReference>
<dbReference type="CDD" id="cd20736">
    <property type="entry name" value="PoNe_Nuclease"/>
    <property type="match status" value="1"/>
</dbReference>
<dbReference type="Gene3D" id="3.40.1350.10">
    <property type="match status" value="1"/>
</dbReference>
<dbReference type="HAMAP" id="MF_00048">
    <property type="entry name" value="UPF0102"/>
    <property type="match status" value="1"/>
</dbReference>
<dbReference type="InterPro" id="IPR011335">
    <property type="entry name" value="Restrct_endonuc-II-like"/>
</dbReference>
<dbReference type="InterPro" id="IPR011856">
    <property type="entry name" value="tRNA_endonuc-like_dom_sf"/>
</dbReference>
<dbReference type="InterPro" id="IPR003509">
    <property type="entry name" value="UPF0102_YraN-like"/>
</dbReference>
<dbReference type="NCBIfam" id="NF009150">
    <property type="entry name" value="PRK12497.1-3"/>
    <property type="match status" value="1"/>
</dbReference>
<dbReference type="NCBIfam" id="NF009154">
    <property type="entry name" value="PRK12497.3-3"/>
    <property type="match status" value="1"/>
</dbReference>
<dbReference type="NCBIfam" id="TIGR00252">
    <property type="entry name" value="YraN family protein"/>
    <property type="match status" value="1"/>
</dbReference>
<dbReference type="PANTHER" id="PTHR34039">
    <property type="entry name" value="UPF0102 PROTEIN YRAN"/>
    <property type="match status" value="1"/>
</dbReference>
<dbReference type="PANTHER" id="PTHR34039:SF1">
    <property type="entry name" value="UPF0102 PROTEIN YRAN"/>
    <property type="match status" value="1"/>
</dbReference>
<dbReference type="Pfam" id="PF02021">
    <property type="entry name" value="UPF0102"/>
    <property type="match status" value="1"/>
</dbReference>
<dbReference type="SUPFAM" id="SSF52980">
    <property type="entry name" value="Restriction endonuclease-like"/>
    <property type="match status" value="1"/>
</dbReference>
<sequence length="118" mass="13851">MNNKEIGKLGEDFTVEFLSSRGFIVLERNYKVSFGEIDIIARKGDILIFVEVKTRRNLDFGMPVESVSFEKQNRIKKIAEIYVKNKQLRFKEIRFDIMSIILSPKGEVLNWEYLPNAF</sequence>
<proteinExistence type="inferred from homology"/>